<keyword id="KW-0627">Porphyrin biosynthesis</keyword>
<keyword id="KW-0808">Transferase</keyword>
<proteinExistence type="inferred from homology"/>
<reference key="1">
    <citation type="journal article" date="2009" name="PLoS Pathog.">
        <title>Molecular evolutionary consequences of niche restriction in Francisella tularensis, a facultative intracellular pathogen.</title>
        <authorList>
            <person name="Larsson P."/>
            <person name="Elfsmark D."/>
            <person name="Svensson K."/>
            <person name="Wikstroem P."/>
            <person name="Forsman M."/>
            <person name="Brettin T."/>
            <person name="Keim P."/>
            <person name="Johansson A."/>
        </authorList>
    </citation>
    <scope>NUCLEOTIDE SEQUENCE [LARGE SCALE GENOMIC DNA]</scope>
    <source>
        <strain>FSC147</strain>
    </source>
</reference>
<organism>
    <name type="scientific">Francisella tularensis subsp. mediasiatica (strain FSC147)</name>
    <dbReference type="NCBI Taxonomy" id="441952"/>
    <lineage>
        <taxon>Bacteria</taxon>
        <taxon>Pseudomonadati</taxon>
        <taxon>Pseudomonadota</taxon>
        <taxon>Gammaproteobacteria</taxon>
        <taxon>Thiotrichales</taxon>
        <taxon>Francisellaceae</taxon>
        <taxon>Francisella</taxon>
    </lineage>
</organism>
<name>HEM3_FRATM</name>
<sequence length="300" mass="33307">MKQITIASRESKLALWQTNFVKNRIQSELNIPCEISTMKTQGDIILDQPLNKIGGKALFMKELEVAMLSNKADIAVHSLKDVPYQLPQGFCLAGFMPREDPRDAFVSNKYNSIDDLPKGAVVGTSSLRRKAQLLHYRDDLEIRDLRGNIQTRLSKLDNGDYDAIILASAGLIRLELVERITQFIPVEISLPAVGQGIVVIEALERDNDLLEKIQKLNCRESSRVATAERAFNQELKGGCHVAIGAYAELDNNQITLMAMVASSDGKKILKRKMIGDDPTKLGKLLAQEMIALGAYKILES</sequence>
<gene>
    <name evidence="1" type="primary">hemC</name>
    <name type="ordered locus">FTM_1581</name>
</gene>
<dbReference type="EC" id="2.5.1.61" evidence="1"/>
<dbReference type="EMBL" id="CP000915">
    <property type="protein sequence ID" value="ACD31398.1"/>
    <property type="molecule type" value="Genomic_DNA"/>
</dbReference>
<dbReference type="SMR" id="B2SE34"/>
<dbReference type="KEGG" id="ftm:FTM_1581"/>
<dbReference type="HOGENOM" id="CLU_019704_0_2_6"/>
<dbReference type="UniPathway" id="UPA00251">
    <property type="reaction ID" value="UER00319"/>
</dbReference>
<dbReference type="GO" id="GO:0005737">
    <property type="term" value="C:cytoplasm"/>
    <property type="evidence" value="ECO:0007669"/>
    <property type="project" value="TreeGrafter"/>
</dbReference>
<dbReference type="GO" id="GO:0004418">
    <property type="term" value="F:hydroxymethylbilane synthase activity"/>
    <property type="evidence" value="ECO:0007669"/>
    <property type="project" value="UniProtKB-UniRule"/>
</dbReference>
<dbReference type="GO" id="GO:0006782">
    <property type="term" value="P:protoporphyrinogen IX biosynthetic process"/>
    <property type="evidence" value="ECO:0007669"/>
    <property type="project" value="UniProtKB-UniRule"/>
</dbReference>
<dbReference type="CDD" id="cd13646">
    <property type="entry name" value="PBP2_EcHMBS_like"/>
    <property type="match status" value="1"/>
</dbReference>
<dbReference type="FunFam" id="3.40.190.10:FF:000004">
    <property type="entry name" value="Porphobilinogen deaminase"/>
    <property type="match status" value="1"/>
</dbReference>
<dbReference type="FunFam" id="3.40.190.10:FF:000005">
    <property type="entry name" value="Porphobilinogen deaminase"/>
    <property type="match status" value="1"/>
</dbReference>
<dbReference type="Gene3D" id="3.40.190.10">
    <property type="entry name" value="Periplasmic binding protein-like II"/>
    <property type="match status" value="2"/>
</dbReference>
<dbReference type="Gene3D" id="3.30.160.40">
    <property type="entry name" value="Porphobilinogen deaminase, C-terminal domain"/>
    <property type="match status" value="1"/>
</dbReference>
<dbReference type="HAMAP" id="MF_00260">
    <property type="entry name" value="Porphobil_deam"/>
    <property type="match status" value="1"/>
</dbReference>
<dbReference type="InterPro" id="IPR000860">
    <property type="entry name" value="HemC"/>
</dbReference>
<dbReference type="InterPro" id="IPR022419">
    <property type="entry name" value="Porphobilin_deaminase_cofac_BS"/>
</dbReference>
<dbReference type="InterPro" id="IPR022417">
    <property type="entry name" value="Porphobilin_deaminase_N"/>
</dbReference>
<dbReference type="InterPro" id="IPR022418">
    <property type="entry name" value="Porphobilinogen_deaminase_C"/>
</dbReference>
<dbReference type="InterPro" id="IPR036803">
    <property type="entry name" value="Porphobilinogen_deaminase_C_sf"/>
</dbReference>
<dbReference type="NCBIfam" id="TIGR00212">
    <property type="entry name" value="hemC"/>
    <property type="match status" value="1"/>
</dbReference>
<dbReference type="PANTHER" id="PTHR11557">
    <property type="entry name" value="PORPHOBILINOGEN DEAMINASE"/>
    <property type="match status" value="1"/>
</dbReference>
<dbReference type="PANTHER" id="PTHR11557:SF0">
    <property type="entry name" value="PORPHOBILINOGEN DEAMINASE"/>
    <property type="match status" value="1"/>
</dbReference>
<dbReference type="Pfam" id="PF01379">
    <property type="entry name" value="Porphobil_deam"/>
    <property type="match status" value="1"/>
</dbReference>
<dbReference type="Pfam" id="PF03900">
    <property type="entry name" value="Porphobil_deamC"/>
    <property type="match status" value="1"/>
</dbReference>
<dbReference type="PIRSF" id="PIRSF001438">
    <property type="entry name" value="4pyrrol_synth_OHMeBilane_synth"/>
    <property type="match status" value="1"/>
</dbReference>
<dbReference type="PRINTS" id="PR00151">
    <property type="entry name" value="PORPHBDMNASE"/>
</dbReference>
<dbReference type="SUPFAM" id="SSF53850">
    <property type="entry name" value="Periplasmic binding protein-like II"/>
    <property type="match status" value="1"/>
</dbReference>
<dbReference type="SUPFAM" id="SSF54782">
    <property type="entry name" value="Porphobilinogen deaminase (hydroxymethylbilane synthase), C-terminal domain"/>
    <property type="match status" value="1"/>
</dbReference>
<dbReference type="PROSITE" id="PS00533">
    <property type="entry name" value="PORPHOBILINOGEN_DEAM"/>
    <property type="match status" value="1"/>
</dbReference>
<comment type="function">
    <text evidence="1">Tetrapolymerization of the monopyrrole PBG into the hydroxymethylbilane pre-uroporphyrinogen in several discrete steps.</text>
</comment>
<comment type="catalytic activity">
    <reaction evidence="1">
        <text>4 porphobilinogen + H2O = hydroxymethylbilane + 4 NH4(+)</text>
        <dbReference type="Rhea" id="RHEA:13185"/>
        <dbReference type="ChEBI" id="CHEBI:15377"/>
        <dbReference type="ChEBI" id="CHEBI:28938"/>
        <dbReference type="ChEBI" id="CHEBI:57845"/>
        <dbReference type="ChEBI" id="CHEBI:58126"/>
        <dbReference type="EC" id="2.5.1.61"/>
    </reaction>
</comment>
<comment type="cofactor">
    <cofactor evidence="1">
        <name>dipyrromethane</name>
        <dbReference type="ChEBI" id="CHEBI:60342"/>
    </cofactor>
    <text evidence="1">Binds 1 dipyrromethane group covalently.</text>
</comment>
<comment type="pathway">
    <text evidence="1">Porphyrin-containing compound metabolism; protoporphyrin-IX biosynthesis; coproporphyrinogen-III from 5-aminolevulinate: step 2/4.</text>
</comment>
<comment type="subunit">
    <text evidence="1">Monomer.</text>
</comment>
<comment type="miscellaneous">
    <text evidence="1">The porphobilinogen subunits are added to the dipyrromethane group.</text>
</comment>
<comment type="similarity">
    <text evidence="1">Belongs to the HMBS family.</text>
</comment>
<accession>B2SE34</accession>
<protein>
    <recommendedName>
        <fullName evidence="1">Porphobilinogen deaminase</fullName>
        <shortName evidence="1">PBG</shortName>
        <ecNumber evidence="1">2.5.1.61</ecNumber>
    </recommendedName>
    <alternativeName>
        <fullName evidence="1">Hydroxymethylbilane synthase</fullName>
        <shortName evidence="1">HMBS</shortName>
    </alternativeName>
    <alternativeName>
        <fullName evidence="1">Pre-uroporphyrinogen synthase</fullName>
    </alternativeName>
</protein>
<evidence type="ECO:0000255" key="1">
    <source>
        <dbReference type="HAMAP-Rule" id="MF_00260"/>
    </source>
</evidence>
<feature type="chain" id="PRO_1000114152" description="Porphobilinogen deaminase">
    <location>
        <begin position="1"/>
        <end position="300"/>
    </location>
</feature>
<feature type="modified residue" description="S-(dipyrrolylmethanemethyl)cysteine" evidence="1">
    <location>
        <position position="239"/>
    </location>
</feature>